<accession>Q9JTR0</accession>
<accession>A1ISP3</accession>
<evidence type="ECO:0000255" key="1">
    <source>
        <dbReference type="HAMAP-Rule" id="MF_00743"/>
    </source>
</evidence>
<feature type="chain" id="PRO_0000161291" description="Fumarate hydratase class II">
    <location>
        <begin position="1"/>
        <end position="462"/>
    </location>
</feature>
<feature type="active site" description="Proton donor/acceptor" evidence="1">
    <location>
        <position position="187"/>
    </location>
</feature>
<feature type="active site" evidence="1">
    <location>
        <position position="317"/>
    </location>
</feature>
<feature type="binding site" evidence="1">
    <location>
        <begin position="97"/>
        <end position="99"/>
    </location>
    <ligand>
        <name>substrate</name>
    </ligand>
</feature>
<feature type="binding site" description="in site B" evidence="1">
    <location>
        <begin position="128"/>
        <end position="131"/>
    </location>
    <ligand>
        <name>substrate</name>
    </ligand>
</feature>
<feature type="binding site" evidence="1">
    <location>
        <begin position="138"/>
        <end position="140"/>
    </location>
    <ligand>
        <name>substrate</name>
    </ligand>
</feature>
<feature type="binding site" evidence="1">
    <location>
        <position position="186"/>
    </location>
    <ligand>
        <name>substrate</name>
    </ligand>
</feature>
<feature type="binding site" evidence="1">
    <location>
        <position position="318"/>
    </location>
    <ligand>
        <name>substrate</name>
    </ligand>
</feature>
<feature type="binding site" evidence="1">
    <location>
        <begin position="323"/>
        <end position="325"/>
    </location>
    <ligand>
        <name>substrate</name>
    </ligand>
</feature>
<feature type="site" description="Important for catalytic activity" evidence="1">
    <location>
        <position position="330"/>
    </location>
</feature>
<organism>
    <name type="scientific">Neisseria meningitidis serogroup A / serotype 4A (strain DSM 15465 / Z2491)</name>
    <dbReference type="NCBI Taxonomy" id="122587"/>
    <lineage>
        <taxon>Bacteria</taxon>
        <taxon>Pseudomonadati</taxon>
        <taxon>Pseudomonadota</taxon>
        <taxon>Betaproteobacteria</taxon>
        <taxon>Neisseriales</taxon>
        <taxon>Neisseriaceae</taxon>
        <taxon>Neisseria</taxon>
    </lineage>
</organism>
<sequence length="462" mass="49391">MNTRTEHDTMGNVEVPSEAYWGAQTQRSRNNFKIGGETLPQPLIYALALVKKAAAATNVSLGRIKPEQADLITQAADDVLNGKLDGQFPLVVWQTGSGTQSNMNMNEVLANRANEIAGTGLAAYQPVHPNDHVNHAQSTNDAFPTAIHVAAAIEINRHLIPAVKALRDTLDKKAQAFAPIVKIGRTHLQDATPLTLGQEFSGYVSQLDHGLGRLNDALKDLYELALGGTAVGTGLNSHPEYAEKAAAKLAELSGLPFVSAPNKFEALGGRDAAVAASGALKTLAASLNKIANDIRWLASGPRCGLGEIKIPENEPGSSIMPGKVNPTQCEAMTMVCCQVFGNDVTIGMAGASGNFELNVYMPVIAYNLLQSIRLLGDACNSFNEHCAVGIEPVPEKIDYFLHHSLMLVTALNRKIGYENAAKVAKTAYKNNKSLRETAVELGLLTGEEFDELVVPADMVHPR</sequence>
<name>FUMC_NEIMA</name>
<dbReference type="EC" id="4.2.1.2" evidence="1"/>
<dbReference type="EMBL" id="AL157959">
    <property type="protein sequence ID" value="CAM08803.1"/>
    <property type="molecule type" value="Genomic_DNA"/>
</dbReference>
<dbReference type="PIR" id="B81862">
    <property type="entry name" value="B81862"/>
</dbReference>
<dbReference type="RefSeq" id="WP_002241750.1">
    <property type="nucleotide sequence ID" value="NC_003116.1"/>
</dbReference>
<dbReference type="SMR" id="Q9JTR0"/>
<dbReference type="EnsemblBacteria" id="CAM08803">
    <property type="protein sequence ID" value="CAM08803"/>
    <property type="gene ID" value="NMA1670"/>
</dbReference>
<dbReference type="GeneID" id="93387913"/>
<dbReference type="KEGG" id="nma:NMA1670"/>
<dbReference type="HOGENOM" id="CLU_021594_4_1_4"/>
<dbReference type="UniPathway" id="UPA00223">
    <property type="reaction ID" value="UER01007"/>
</dbReference>
<dbReference type="Proteomes" id="UP000000626">
    <property type="component" value="Chromosome"/>
</dbReference>
<dbReference type="GO" id="GO:0005737">
    <property type="term" value="C:cytoplasm"/>
    <property type="evidence" value="ECO:0007669"/>
    <property type="project" value="UniProtKB-SubCell"/>
</dbReference>
<dbReference type="GO" id="GO:0004333">
    <property type="term" value="F:fumarate hydratase activity"/>
    <property type="evidence" value="ECO:0007669"/>
    <property type="project" value="UniProtKB-UniRule"/>
</dbReference>
<dbReference type="GO" id="GO:0006106">
    <property type="term" value="P:fumarate metabolic process"/>
    <property type="evidence" value="ECO:0007669"/>
    <property type="project" value="InterPro"/>
</dbReference>
<dbReference type="GO" id="GO:0006108">
    <property type="term" value="P:malate metabolic process"/>
    <property type="evidence" value="ECO:0007669"/>
    <property type="project" value="TreeGrafter"/>
</dbReference>
<dbReference type="GO" id="GO:0006099">
    <property type="term" value="P:tricarboxylic acid cycle"/>
    <property type="evidence" value="ECO:0007669"/>
    <property type="project" value="UniProtKB-UniRule"/>
</dbReference>
<dbReference type="CDD" id="cd01362">
    <property type="entry name" value="Fumarase_classII"/>
    <property type="match status" value="1"/>
</dbReference>
<dbReference type="FunFam" id="1.10.40.30:FF:000002">
    <property type="entry name" value="Fumarate hydratase class II"/>
    <property type="match status" value="1"/>
</dbReference>
<dbReference type="FunFam" id="1.10.275.10:FF:000001">
    <property type="entry name" value="Fumarate hydratase, mitochondrial"/>
    <property type="match status" value="1"/>
</dbReference>
<dbReference type="FunFam" id="1.20.200.10:FF:000001">
    <property type="entry name" value="Fumarate hydratase, mitochondrial"/>
    <property type="match status" value="1"/>
</dbReference>
<dbReference type="Gene3D" id="1.10.40.30">
    <property type="entry name" value="Fumarase/aspartase (C-terminal domain)"/>
    <property type="match status" value="1"/>
</dbReference>
<dbReference type="Gene3D" id="1.20.200.10">
    <property type="entry name" value="Fumarase/aspartase (Central domain)"/>
    <property type="match status" value="1"/>
</dbReference>
<dbReference type="Gene3D" id="1.10.275.10">
    <property type="entry name" value="Fumarase/aspartase (N-terminal domain)"/>
    <property type="match status" value="1"/>
</dbReference>
<dbReference type="HAMAP" id="MF_00743">
    <property type="entry name" value="FumaraseC"/>
    <property type="match status" value="1"/>
</dbReference>
<dbReference type="InterPro" id="IPR005677">
    <property type="entry name" value="Fum_hydII"/>
</dbReference>
<dbReference type="InterPro" id="IPR024083">
    <property type="entry name" value="Fumarase/histidase_N"/>
</dbReference>
<dbReference type="InterPro" id="IPR018951">
    <property type="entry name" value="Fumarase_C_C"/>
</dbReference>
<dbReference type="InterPro" id="IPR020557">
    <property type="entry name" value="Fumarate_lyase_CS"/>
</dbReference>
<dbReference type="InterPro" id="IPR000362">
    <property type="entry name" value="Fumarate_lyase_fam"/>
</dbReference>
<dbReference type="InterPro" id="IPR022761">
    <property type="entry name" value="Fumarate_lyase_N"/>
</dbReference>
<dbReference type="InterPro" id="IPR008948">
    <property type="entry name" value="L-Aspartase-like"/>
</dbReference>
<dbReference type="NCBIfam" id="TIGR00979">
    <property type="entry name" value="fumC_II"/>
    <property type="match status" value="1"/>
</dbReference>
<dbReference type="NCBIfam" id="NF008909">
    <property type="entry name" value="PRK12273.1"/>
    <property type="match status" value="1"/>
</dbReference>
<dbReference type="PANTHER" id="PTHR11444">
    <property type="entry name" value="ASPARTATEAMMONIA/ARGININOSUCCINATE/ADENYLOSUCCINATE LYASE"/>
    <property type="match status" value="1"/>
</dbReference>
<dbReference type="PANTHER" id="PTHR11444:SF1">
    <property type="entry name" value="FUMARATE HYDRATASE, MITOCHONDRIAL"/>
    <property type="match status" value="1"/>
</dbReference>
<dbReference type="Pfam" id="PF10415">
    <property type="entry name" value="FumaraseC_C"/>
    <property type="match status" value="1"/>
</dbReference>
<dbReference type="Pfam" id="PF00206">
    <property type="entry name" value="Lyase_1"/>
    <property type="match status" value="1"/>
</dbReference>
<dbReference type="PRINTS" id="PR00149">
    <property type="entry name" value="FUMRATELYASE"/>
</dbReference>
<dbReference type="SUPFAM" id="SSF48557">
    <property type="entry name" value="L-aspartase-like"/>
    <property type="match status" value="1"/>
</dbReference>
<dbReference type="PROSITE" id="PS00163">
    <property type="entry name" value="FUMARATE_LYASES"/>
    <property type="match status" value="1"/>
</dbReference>
<reference key="1">
    <citation type="journal article" date="2000" name="Nature">
        <title>Complete DNA sequence of a serogroup A strain of Neisseria meningitidis Z2491.</title>
        <authorList>
            <person name="Parkhill J."/>
            <person name="Achtman M."/>
            <person name="James K.D."/>
            <person name="Bentley S.D."/>
            <person name="Churcher C.M."/>
            <person name="Klee S.R."/>
            <person name="Morelli G."/>
            <person name="Basham D."/>
            <person name="Brown D."/>
            <person name="Chillingworth T."/>
            <person name="Davies R.M."/>
            <person name="Davis P."/>
            <person name="Devlin K."/>
            <person name="Feltwell T."/>
            <person name="Hamlin N."/>
            <person name="Holroyd S."/>
            <person name="Jagels K."/>
            <person name="Leather S."/>
            <person name="Moule S."/>
            <person name="Mungall K.L."/>
            <person name="Quail M.A."/>
            <person name="Rajandream M.A."/>
            <person name="Rutherford K.M."/>
            <person name="Simmonds M."/>
            <person name="Skelton J."/>
            <person name="Whitehead S."/>
            <person name="Spratt B.G."/>
            <person name="Barrell B.G."/>
        </authorList>
    </citation>
    <scope>NUCLEOTIDE SEQUENCE [LARGE SCALE GENOMIC DNA]</scope>
    <source>
        <strain>DSM 15465 / Z2491</strain>
    </source>
</reference>
<keyword id="KW-0963">Cytoplasm</keyword>
<keyword id="KW-0456">Lyase</keyword>
<keyword id="KW-0816">Tricarboxylic acid cycle</keyword>
<comment type="function">
    <text evidence="1">Involved in the TCA cycle. Catalyzes the stereospecific interconversion of fumarate to L-malate.</text>
</comment>
<comment type="catalytic activity">
    <reaction evidence="1">
        <text>(S)-malate = fumarate + H2O</text>
        <dbReference type="Rhea" id="RHEA:12460"/>
        <dbReference type="ChEBI" id="CHEBI:15377"/>
        <dbReference type="ChEBI" id="CHEBI:15589"/>
        <dbReference type="ChEBI" id="CHEBI:29806"/>
        <dbReference type="EC" id="4.2.1.2"/>
    </reaction>
</comment>
<comment type="pathway">
    <text evidence="1">Carbohydrate metabolism; tricarboxylic acid cycle; (S)-malate from fumarate: step 1/1.</text>
</comment>
<comment type="subunit">
    <text evidence="1">Homotetramer.</text>
</comment>
<comment type="subcellular location">
    <subcellularLocation>
        <location evidence="1">Cytoplasm</location>
    </subcellularLocation>
</comment>
<comment type="miscellaneous">
    <text evidence="1">There are 2 substrate-binding sites: the catalytic A site, and the non-catalytic B site that may play a role in the transfer of substrate or product between the active site and the solvent. Alternatively, the B site may bind allosteric effectors.</text>
</comment>
<comment type="similarity">
    <text evidence="1">Belongs to the class-II fumarase/aspartase family. Fumarase subfamily.</text>
</comment>
<proteinExistence type="inferred from homology"/>
<gene>
    <name evidence="1" type="primary">fumC</name>
    <name type="ordered locus">NMA1670</name>
</gene>
<protein>
    <recommendedName>
        <fullName evidence="1">Fumarate hydratase class II</fullName>
        <shortName evidence="1">Fumarase C</shortName>
        <ecNumber evidence="1">4.2.1.2</ecNumber>
    </recommendedName>
    <alternativeName>
        <fullName evidence="1">Aerobic fumarase</fullName>
    </alternativeName>
    <alternativeName>
        <fullName evidence="1">Iron-independent fumarase</fullName>
    </alternativeName>
</protein>